<gene>
    <name evidence="3" type="primary">AT9</name>
    <name evidence="6" type="ordered locus">Os01g0185300</name>
    <name evidence="4" type="ordered locus">LOC_Os01g09010</name>
    <name evidence="5" type="ORF">P0510F03.18</name>
</gene>
<comment type="function">
    <text evidence="2">Involved in the incorporation of ferulate into the cell wall. May act as arabinoxylan feruloyl transferase.</text>
</comment>
<comment type="similarity">
    <text evidence="4">Belongs to the plant acyltransferase family.</text>
</comment>
<feature type="chain" id="PRO_0000437779" description="Acyl transferase 9">
    <location>
        <begin position="1"/>
        <end position="419"/>
    </location>
</feature>
<feature type="active site" description="Proton acceptor" evidence="1">
    <location>
        <position position="161"/>
    </location>
</feature>
<feature type="active site" description="Proton acceptor" evidence="1">
    <location>
        <position position="362"/>
    </location>
</feature>
<evidence type="ECO:0000250" key="1">
    <source>
        <dbReference type="UniProtKB" id="Q8W1W9"/>
    </source>
</evidence>
<evidence type="ECO:0000269" key="2">
    <source>
    </source>
</evidence>
<evidence type="ECO:0000303" key="3">
    <source>
    </source>
</evidence>
<evidence type="ECO:0000305" key="4"/>
<evidence type="ECO:0000312" key="5">
    <source>
        <dbReference type="EMBL" id="BAB03362.1"/>
    </source>
</evidence>
<evidence type="ECO:0000312" key="6">
    <source>
        <dbReference type="EMBL" id="BAF04153.1"/>
    </source>
</evidence>
<protein>
    <recommendedName>
        <fullName evidence="4">Acyl transferase 9</fullName>
        <shortName evidence="3">OsAT9</shortName>
        <ecNumber evidence="4">2.3.1.-</ecNumber>
    </recommendedName>
</protein>
<organism>
    <name type="scientific">Oryza sativa subsp. japonica</name>
    <name type="common">Rice</name>
    <dbReference type="NCBI Taxonomy" id="39947"/>
    <lineage>
        <taxon>Eukaryota</taxon>
        <taxon>Viridiplantae</taxon>
        <taxon>Streptophyta</taxon>
        <taxon>Embryophyta</taxon>
        <taxon>Tracheophyta</taxon>
        <taxon>Spermatophyta</taxon>
        <taxon>Magnoliopsida</taxon>
        <taxon>Liliopsida</taxon>
        <taxon>Poales</taxon>
        <taxon>Poaceae</taxon>
        <taxon>BOP clade</taxon>
        <taxon>Oryzoideae</taxon>
        <taxon>Oryzeae</taxon>
        <taxon>Oryzinae</taxon>
        <taxon>Oryza</taxon>
        <taxon>Oryza sativa</taxon>
    </lineage>
</organism>
<reference key="1">
    <citation type="journal article" date="2002" name="Nature">
        <title>The genome sequence and structure of rice chromosome 1.</title>
        <authorList>
            <person name="Sasaki T."/>
            <person name="Matsumoto T."/>
            <person name="Yamamoto K."/>
            <person name="Sakata K."/>
            <person name="Baba T."/>
            <person name="Katayose Y."/>
            <person name="Wu J."/>
            <person name="Niimura Y."/>
            <person name="Cheng Z."/>
            <person name="Nagamura Y."/>
            <person name="Antonio B.A."/>
            <person name="Kanamori H."/>
            <person name="Hosokawa S."/>
            <person name="Masukawa M."/>
            <person name="Arikawa K."/>
            <person name="Chiden Y."/>
            <person name="Hayashi M."/>
            <person name="Okamoto M."/>
            <person name="Ando T."/>
            <person name="Aoki H."/>
            <person name="Arita K."/>
            <person name="Hamada M."/>
            <person name="Harada C."/>
            <person name="Hijishita S."/>
            <person name="Honda M."/>
            <person name="Ichikawa Y."/>
            <person name="Idonuma A."/>
            <person name="Iijima M."/>
            <person name="Ikeda M."/>
            <person name="Ikeno M."/>
            <person name="Ito S."/>
            <person name="Ito T."/>
            <person name="Ito Y."/>
            <person name="Ito Y."/>
            <person name="Iwabuchi A."/>
            <person name="Kamiya K."/>
            <person name="Karasawa W."/>
            <person name="Katagiri S."/>
            <person name="Kikuta A."/>
            <person name="Kobayashi N."/>
            <person name="Kono I."/>
            <person name="Machita K."/>
            <person name="Maehara T."/>
            <person name="Mizuno H."/>
            <person name="Mizubayashi T."/>
            <person name="Mukai Y."/>
            <person name="Nagasaki H."/>
            <person name="Nakashima M."/>
            <person name="Nakama Y."/>
            <person name="Nakamichi Y."/>
            <person name="Nakamura M."/>
            <person name="Namiki N."/>
            <person name="Negishi M."/>
            <person name="Ohta I."/>
            <person name="Ono N."/>
            <person name="Saji S."/>
            <person name="Sakai K."/>
            <person name="Shibata M."/>
            <person name="Shimokawa T."/>
            <person name="Shomura A."/>
            <person name="Song J."/>
            <person name="Takazaki Y."/>
            <person name="Terasawa K."/>
            <person name="Tsuji K."/>
            <person name="Waki K."/>
            <person name="Yamagata H."/>
            <person name="Yamane H."/>
            <person name="Yoshiki S."/>
            <person name="Yoshihara R."/>
            <person name="Yukawa K."/>
            <person name="Zhong H."/>
            <person name="Iwama H."/>
            <person name="Endo T."/>
            <person name="Ito H."/>
            <person name="Hahn J.H."/>
            <person name="Kim H.-I."/>
            <person name="Eun M.-Y."/>
            <person name="Yano M."/>
            <person name="Jiang J."/>
            <person name="Gojobori T."/>
        </authorList>
    </citation>
    <scope>NUCLEOTIDE SEQUENCE [LARGE SCALE GENOMIC DNA]</scope>
    <source>
        <strain>cv. Nipponbare</strain>
    </source>
</reference>
<reference key="2">
    <citation type="journal article" date="2005" name="Nature">
        <title>The map-based sequence of the rice genome.</title>
        <authorList>
            <consortium name="International rice genome sequencing project (IRGSP)"/>
        </authorList>
    </citation>
    <scope>NUCLEOTIDE SEQUENCE [LARGE SCALE GENOMIC DNA]</scope>
    <source>
        <strain>cv. Nipponbare</strain>
    </source>
</reference>
<reference key="3">
    <citation type="journal article" date="2008" name="Nucleic Acids Res.">
        <title>The rice annotation project database (RAP-DB): 2008 update.</title>
        <authorList>
            <consortium name="The rice annotation project (RAP)"/>
        </authorList>
    </citation>
    <scope>GENOME REANNOTATION</scope>
    <source>
        <strain>cv. Nipponbare</strain>
    </source>
</reference>
<reference key="4">
    <citation type="journal article" date="2013" name="Rice">
        <title>Improvement of the Oryza sativa Nipponbare reference genome using next generation sequence and optical map data.</title>
        <authorList>
            <person name="Kawahara Y."/>
            <person name="de la Bastide M."/>
            <person name="Hamilton J.P."/>
            <person name="Kanamori H."/>
            <person name="McCombie W.R."/>
            <person name="Ouyang S."/>
            <person name="Schwartz D.C."/>
            <person name="Tanaka T."/>
            <person name="Wu J."/>
            <person name="Zhou S."/>
            <person name="Childs K.L."/>
            <person name="Davidson R.M."/>
            <person name="Lin H."/>
            <person name="Quesada-Ocampo L."/>
            <person name="Vaillancourt B."/>
            <person name="Sakai H."/>
            <person name="Lee S.S."/>
            <person name="Kim J."/>
            <person name="Numa H."/>
            <person name="Itoh T."/>
            <person name="Buell C.R."/>
            <person name="Matsumoto T."/>
        </authorList>
    </citation>
    <scope>GENOME REANNOTATION</scope>
    <source>
        <strain>cv. Nipponbare</strain>
    </source>
</reference>
<reference key="5">
    <citation type="journal article" date="2003" name="Science">
        <title>Collection, mapping, and annotation of over 28,000 cDNA clones from japonica rice.</title>
        <authorList>
            <consortium name="The rice full-length cDNA consortium"/>
        </authorList>
    </citation>
    <scope>NUCLEOTIDE SEQUENCE [LARGE SCALE MRNA]</scope>
    <source>
        <strain>cv. Nipponbare</strain>
    </source>
</reference>
<reference key="6">
    <citation type="journal article" date="2010" name="Planta">
        <title>Down-regulation of four putative arabinoxylan feruloyl transferase genes from family PF02458 reduces ester-linked ferulate content in rice cell walls.</title>
        <authorList>
            <person name="Piston F."/>
            <person name="Uauy C."/>
            <person name="Fu L."/>
            <person name="Langston J."/>
            <person name="Labavitch J."/>
            <person name="Dubcovsky J."/>
        </authorList>
    </citation>
    <scope>FUNCTION</scope>
</reference>
<reference key="7">
    <citation type="journal article" date="2013" name="Plant Physiol.">
        <title>Overexpression of a BAHD acyltransferase, OsAt10, alters rice cell wall hydroxycinnamic acid content and saccharification.</title>
        <authorList>
            <person name="Bartley L.E."/>
            <person name="Peck M.L."/>
            <person name="Kim S.R."/>
            <person name="Ebert B."/>
            <person name="Manisseri C."/>
            <person name="Chiniquy D.M."/>
            <person name="Sykes R."/>
            <person name="Gao L."/>
            <person name="Rautengarten C."/>
            <person name="Vega-Sanchez M.E."/>
            <person name="Benke P.I."/>
            <person name="Canlas P.E."/>
            <person name="Cao P."/>
            <person name="Brewer S."/>
            <person name="Lin F."/>
            <person name="Smith W.L."/>
            <person name="Zhang X."/>
            <person name="Keasling J.D."/>
            <person name="Jentoff R.E."/>
            <person name="Foster S.B."/>
            <person name="Zhou J."/>
            <person name="Ziebell A."/>
            <person name="An G."/>
            <person name="Scheller H.V."/>
            <person name="Ronald P.C."/>
        </authorList>
    </citation>
    <scope>GENE FAMILY</scope>
    <scope>NOMENCLATURE</scope>
</reference>
<sequence length="419" mass="46166">MAGTGSFKVTRISEGAVKPAAATPEETLPLAWVDRYPTHRGLVESMHIFRSGADAAPGVIRDALARALVFFYPLAGRIVEPEAGSPAIRCTADGVYFAEAAADCSLEDVRFLERPLLLPKEDLVPYPGDDRWGVEPHNTIMMMQITKFTCGGFVMGLRFNHASADGMGAAQFINAVGDMARGLPEPRVKPVWDREKFPNPSIKPGPLPGLPVLALDYIVLDFPTGYIDGLKAQYKAHSGKFCSGFDVLTAKLWQCRTRALNLEPGATVKLCFFASVRHLLKLDRGYYGNSIFPVKMSAPSETVLSSSVMEVVDMIRQAKERMAVEFFQFAKEETEQDPFQMTFNYESIYVSDWSKLGFAEVDYGFGPPKFAGPLVNNDFIASVVILKAPLPLDGTRMLASCVTKEHSEEFVRGMKEDLP</sequence>
<name>AT9_ORYSJ</name>
<dbReference type="EC" id="2.3.1.-" evidence="4"/>
<dbReference type="EMBL" id="AP002486">
    <property type="protein sequence ID" value="BAB03362.1"/>
    <property type="molecule type" value="Genomic_DNA"/>
</dbReference>
<dbReference type="EMBL" id="AP008207">
    <property type="protein sequence ID" value="BAF04153.1"/>
    <property type="molecule type" value="Genomic_DNA"/>
</dbReference>
<dbReference type="EMBL" id="AP014957">
    <property type="protein sequence ID" value="BAS70776.1"/>
    <property type="molecule type" value="Genomic_DNA"/>
</dbReference>
<dbReference type="EMBL" id="AK098922">
    <property type="protein sequence ID" value="BAG93814.1"/>
    <property type="molecule type" value="mRNA"/>
</dbReference>
<dbReference type="RefSeq" id="NP_001388400.1">
    <property type="nucleotide sequence ID" value="NM_001401471.1"/>
</dbReference>
<dbReference type="RefSeq" id="XP_015618385.1">
    <property type="nucleotide sequence ID" value="XM_015762899.1"/>
</dbReference>
<dbReference type="SMR" id="Q9LGQ6"/>
<dbReference type="STRING" id="39947.Q9LGQ6"/>
<dbReference type="PaxDb" id="39947-Q9LGQ6"/>
<dbReference type="EnsemblPlants" id="Os01t0185300-01">
    <property type="protein sequence ID" value="Os01t0185300-01"/>
    <property type="gene ID" value="Os01g0185300"/>
</dbReference>
<dbReference type="GeneID" id="4325654"/>
<dbReference type="Gramene" id="Os01t0185300-01">
    <property type="protein sequence ID" value="Os01t0185300-01"/>
    <property type="gene ID" value="Os01g0185300"/>
</dbReference>
<dbReference type="KEGG" id="dosa:Os01g0185300"/>
<dbReference type="eggNOG" id="ENOG502RMG6">
    <property type="taxonomic scope" value="Eukaryota"/>
</dbReference>
<dbReference type="HOGENOM" id="CLU_014546_2_0_1"/>
<dbReference type="InParanoid" id="Q9LGQ6"/>
<dbReference type="OMA" id="WANDEFE"/>
<dbReference type="OrthoDB" id="444127at2759"/>
<dbReference type="Proteomes" id="UP000000763">
    <property type="component" value="Chromosome 1"/>
</dbReference>
<dbReference type="Proteomes" id="UP000059680">
    <property type="component" value="Chromosome 1"/>
</dbReference>
<dbReference type="ExpressionAtlas" id="Q9LGQ6">
    <property type="expression patterns" value="baseline and differential"/>
</dbReference>
<dbReference type="GO" id="GO:0050734">
    <property type="term" value="F:hydroxycinnamoyltransferase activity"/>
    <property type="evidence" value="ECO:0007669"/>
    <property type="project" value="UniProtKB-ARBA"/>
</dbReference>
<dbReference type="Gene3D" id="3.30.559.10">
    <property type="entry name" value="Chloramphenicol acetyltransferase-like domain"/>
    <property type="match status" value="2"/>
</dbReference>
<dbReference type="InterPro" id="IPR023213">
    <property type="entry name" value="CAT-like_dom_sf"/>
</dbReference>
<dbReference type="InterPro" id="IPR050898">
    <property type="entry name" value="Plant_acyltransferase"/>
</dbReference>
<dbReference type="PANTHER" id="PTHR31147">
    <property type="entry name" value="ACYL TRANSFERASE 4"/>
    <property type="match status" value="1"/>
</dbReference>
<dbReference type="PANTHER" id="PTHR31147:SF34">
    <property type="entry name" value="ACYL TRANSFERASE 9"/>
    <property type="match status" value="1"/>
</dbReference>
<dbReference type="Pfam" id="PF02458">
    <property type="entry name" value="Transferase"/>
    <property type="match status" value="1"/>
</dbReference>
<proteinExistence type="evidence at transcript level"/>
<keyword id="KW-0012">Acyltransferase</keyword>
<keyword id="KW-1185">Reference proteome</keyword>
<keyword id="KW-0808">Transferase</keyword>
<accession>Q9LGQ6</accession>